<dbReference type="EC" id="1.1.1.330" evidence="4"/>
<dbReference type="EMBL" id="CU329670">
    <property type="protein sequence ID" value="CAA93565.1"/>
    <property type="molecule type" value="Genomic_DNA"/>
</dbReference>
<dbReference type="PIR" id="T38874">
    <property type="entry name" value="T38874"/>
</dbReference>
<dbReference type="SMR" id="Q10245"/>
<dbReference type="BioGRID" id="279531">
    <property type="interactions" value="2"/>
</dbReference>
<dbReference type="FunCoup" id="Q10245">
    <property type="interactions" value="523"/>
</dbReference>
<dbReference type="STRING" id="284812.Q10245"/>
<dbReference type="PaxDb" id="4896-SPAC4G9.15.1"/>
<dbReference type="EnsemblFungi" id="SPAC4G9.15.1">
    <property type="protein sequence ID" value="SPAC4G9.15.1:pep"/>
    <property type="gene ID" value="SPAC4G9.15"/>
</dbReference>
<dbReference type="KEGG" id="spo:2543099"/>
<dbReference type="PomBase" id="SPAC4G9.15"/>
<dbReference type="VEuPathDB" id="FungiDB:SPAC4G9.15"/>
<dbReference type="eggNOG" id="KOG1014">
    <property type="taxonomic scope" value="Eukaryota"/>
</dbReference>
<dbReference type="HOGENOM" id="CLU_010194_38_0_1"/>
<dbReference type="InParanoid" id="Q10245"/>
<dbReference type="OMA" id="LVAPGMM"/>
<dbReference type="PhylomeDB" id="Q10245"/>
<dbReference type="UniPathway" id="UPA00094"/>
<dbReference type="PRO" id="PR:Q10245"/>
<dbReference type="Proteomes" id="UP000002485">
    <property type="component" value="Chromosome I"/>
</dbReference>
<dbReference type="GO" id="GO:0005783">
    <property type="term" value="C:endoplasmic reticulum"/>
    <property type="evidence" value="ECO:0007005"/>
    <property type="project" value="PomBase"/>
</dbReference>
<dbReference type="GO" id="GO:0005789">
    <property type="term" value="C:endoplasmic reticulum membrane"/>
    <property type="evidence" value="ECO:0007669"/>
    <property type="project" value="UniProtKB-SubCell"/>
</dbReference>
<dbReference type="GO" id="GO:0045703">
    <property type="term" value="F:ketoreductase activity"/>
    <property type="evidence" value="ECO:0000266"/>
    <property type="project" value="PomBase"/>
</dbReference>
<dbReference type="GO" id="GO:0141040">
    <property type="term" value="F:very-long-chain 3-oxoacyl-CoA reductase activity"/>
    <property type="evidence" value="ECO:0007669"/>
    <property type="project" value="UniProtKB-EC"/>
</dbReference>
<dbReference type="GO" id="GO:0030497">
    <property type="term" value="P:fatty acid elongation"/>
    <property type="evidence" value="ECO:0000318"/>
    <property type="project" value="GO_Central"/>
</dbReference>
<dbReference type="GO" id="GO:0030148">
    <property type="term" value="P:sphingolipid biosynthetic process"/>
    <property type="evidence" value="ECO:0000266"/>
    <property type="project" value="PomBase"/>
</dbReference>
<dbReference type="CDD" id="cd05356">
    <property type="entry name" value="17beta-HSD1_like_SDR_c"/>
    <property type="match status" value="1"/>
</dbReference>
<dbReference type="Gene3D" id="3.40.50.720">
    <property type="entry name" value="NAD(P)-binding Rossmann-like Domain"/>
    <property type="match status" value="1"/>
</dbReference>
<dbReference type="HAMAP" id="MF_03107">
    <property type="entry name" value="3_ketoreductase"/>
    <property type="match status" value="1"/>
</dbReference>
<dbReference type="InterPro" id="IPR027533">
    <property type="entry name" value="3_ketoreductase_fungal"/>
</dbReference>
<dbReference type="InterPro" id="IPR036291">
    <property type="entry name" value="NAD(P)-bd_dom_sf"/>
</dbReference>
<dbReference type="InterPro" id="IPR020904">
    <property type="entry name" value="Sc_DH/Rdtase_CS"/>
</dbReference>
<dbReference type="InterPro" id="IPR002347">
    <property type="entry name" value="SDR_fam"/>
</dbReference>
<dbReference type="PANTHER" id="PTHR43086:SF2">
    <property type="entry name" value="HYDROXYSTEROID DEHYDROGENASE-LIKE PROTEIN 1"/>
    <property type="match status" value="1"/>
</dbReference>
<dbReference type="PANTHER" id="PTHR43086">
    <property type="entry name" value="VERY-LONG-CHAIN 3-OXOOACYL-COA REDUCTASE"/>
    <property type="match status" value="1"/>
</dbReference>
<dbReference type="Pfam" id="PF00106">
    <property type="entry name" value="adh_short"/>
    <property type="match status" value="1"/>
</dbReference>
<dbReference type="PIRSF" id="PIRSF000126">
    <property type="entry name" value="11-beta-HSD1"/>
    <property type="match status" value="1"/>
</dbReference>
<dbReference type="PRINTS" id="PR00081">
    <property type="entry name" value="GDHRDH"/>
</dbReference>
<dbReference type="SUPFAM" id="SSF51735">
    <property type="entry name" value="NAD(P)-binding Rossmann-fold domains"/>
    <property type="match status" value="1"/>
</dbReference>
<dbReference type="PROSITE" id="PS00061">
    <property type="entry name" value="ADH_SHORT"/>
    <property type="match status" value="1"/>
</dbReference>
<gene>
    <name type="ORF">SPAC4G9.15</name>
</gene>
<reference key="1">
    <citation type="journal article" date="2002" name="Nature">
        <title>The genome sequence of Schizosaccharomyces pombe.</title>
        <authorList>
            <person name="Wood V."/>
            <person name="Gwilliam R."/>
            <person name="Rajandream M.A."/>
            <person name="Lyne M.H."/>
            <person name="Lyne R."/>
            <person name="Stewart A."/>
            <person name="Sgouros J.G."/>
            <person name="Peat N."/>
            <person name="Hayles J."/>
            <person name="Baker S.G."/>
            <person name="Basham D."/>
            <person name="Bowman S."/>
            <person name="Brooks K."/>
            <person name="Brown D."/>
            <person name="Brown S."/>
            <person name="Chillingworth T."/>
            <person name="Churcher C.M."/>
            <person name="Collins M."/>
            <person name="Connor R."/>
            <person name="Cronin A."/>
            <person name="Davis P."/>
            <person name="Feltwell T."/>
            <person name="Fraser A."/>
            <person name="Gentles S."/>
            <person name="Goble A."/>
            <person name="Hamlin N."/>
            <person name="Harris D.E."/>
            <person name="Hidalgo J."/>
            <person name="Hodgson G."/>
            <person name="Holroyd S."/>
            <person name="Hornsby T."/>
            <person name="Howarth S."/>
            <person name="Huckle E.J."/>
            <person name="Hunt S."/>
            <person name="Jagels K."/>
            <person name="James K.D."/>
            <person name="Jones L."/>
            <person name="Jones M."/>
            <person name="Leather S."/>
            <person name="McDonald S."/>
            <person name="McLean J."/>
            <person name="Mooney P."/>
            <person name="Moule S."/>
            <person name="Mungall K.L."/>
            <person name="Murphy L.D."/>
            <person name="Niblett D."/>
            <person name="Odell C."/>
            <person name="Oliver K."/>
            <person name="O'Neil S."/>
            <person name="Pearson D."/>
            <person name="Quail M.A."/>
            <person name="Rabbinowitsch E."/>
            <person name="Rutherford K.M."/>
            <person name="Rutter S."/>
            <person name="Saunders D."/>
            <person name="Seeger K."/>
            <person name="Sharp S."/>
            <person name="Skelton J."/>
            <person name="Simmonds M.N."/>
            <person name="Squares R."/>
            <person name="Squares S."/>
            <person name="Stevens K."/>
            <person name="Taylor K."/>
            <person name="Taylor R.G."/>
            <person name="Tivey A."/>
            <person name="Walsh S.V."/>
            <person name="Warren T."/>
            <person name="Whitehead S."/>
            <person name="Woodward J.R."/>
            <person name="Volckaert G."/>
            <person name="Aert R."/>
            <person name="Robben J."/>
            <person name="Grymonprez B."/>
            <person name="Weltjens I."/>
            <person name="Vanstreels E."/>
            <person name="Rieger M."/>
            <person name="Schaefer M."/>
            <person name="Mueller-Auer S."/>
            <person name="Gabel C."/>
            <person name="Fuchs M."/>
            <person name="Duesterhoeft A."/>
            <person name="Fritzc C."/>
            <person name="Holzer E."/>
            <person name="Moestl D."/>
            <person name="Hilbert H."/>
            <person name="Borzym K."/>
            <person name="Langer I."/>
            <person name="Beck A."/>
            <person name="Lehrach H."/>
            <person name="Reinhardt R."/>
            <person name="Pohl T.M."/>
            <person name="Eger P."/>
            <person name="Zimmermann W."/>
            <person name="Wedler H."/>
            <person name="Wambutt R."/>
            <person name="Purnelle B."/>
            <person name="Goffeau A."/>
            <person name="Cadieu E."/>
            <person name="Dreano S."/>
            <person name="Gloux S."/>
            <person name="Lelaure V."/>
            <person name="Mottier S."/>
            <person name="Galibert F."/>
            <person name="Aves S.J."/>
            <person name="Xiang Z."/>
            <person name="Hunt C."/>
            <person name="Moore K."/>
            <person name="Hurst S.M."/>
            <person name="Lucas M."/>
            <person name="Rochet M."/>
            <person name="Gaillardin C."/>
            <person name="Tallada V.A."/>
            <person name="Garzon A."/>
            <person name="Thode G."/>
            <person name="Daga R.R."/>
            <person name="Cruzado L."/>
            <person name="Jimenez J."/>
            <person name="Sanchez M."/>
            <person name="del Rey F."/>
            <person name="Benito J."/>
            <person name="Dominguez A."/>
            <person name="Revuelta J.L."/>
            <person name="Moreno S."/>
            <person name="Armstrong J."/>
            <person name="Forsburg S.L."/>
            <person name="Cerutti L."/>
            <person name="Lowe T."/>
            <person name="McCombie W.R."/>
            <person name="Paulsen I."/>
            <person name="Potashkin J."/>
            <person name="Shpakovski G.V."/>
            <person name="Ussery D."/>
            <person name="Barrell B.G."/>
            <person name="Nurse P."/>
        </authorList>
    </citation>
    <scope>NUCLEOTIDE SEQUENCE [LARGE SCALE GENOMIC DNA]</scope>
    <source>
        <strain>972 / ATCC 24843</strain>
    </source>
</reference>
<accession>Q10245</accession>
<evidence type="ECO:0000250" key="1">
    <source>
        <dbReference type="UniProtKB" id="L0E2Z4"/>
    </source>
</evidence>
<evidence type="ECO:0000250" key="2">
    <source>
        <dbReference type="UniProtKB" id="O93868"/>
    </source>
</evidence>
<evidence type="ECO:0000250" key="3">
    <source>
        <dbReference type="UniProtKB" id="P38286"/>
    </source>
</evidence>
<evidence type="ECO:0000255" key="4">
    <source>
        <dbReference type="HAMAP-Rule" id="MF_03107"/>
    </source>
</evidence>
<organism>
    <name type="scientific">Schizosaccharomyces pombe (strain 972 / ATCC 24843)</name>
    <name type="common">Fission yeast</name>
    <dbReference type="NCBI Taxonomy" id="284812"/>
    <lineage>
        <taxon>Eukaryota</taxon>
        <taxon>Fungi</taxon>
        <taxon>Dikarya</taxon>
        <taxon>Ascomycota</taxon>
        <taxon>Taphrinomycotina</taxon>
        <taxon>Schizosaccharomycetes</taxon>
        <taxon>Schizosaccharomycetales</taxon>
        <taxon>Schizosaccharomycetaceae</taxon>
        <taxon>Schizosaccharomyces</taxon>
    </lineage>
</organism>
<proteinExistence type="inferred from homology"/>
<comment type="function">
    <text evidence="4">Component of the microsomal membrane bound fatty acid elongation system, which produces the 26-carbon very long-chain fatty acids (VLCFA) from palmitate. Catalyzes the reduction of the 3-ketoacyl-CoA intermediate that is formed in each cycle of fatty acid elongation. VLCFAs serve as precursors for ceramide and sphingolipids.</text>
</comment>
<comment type="catalytic activity">
    <reaction evidence="4">
        <text>a very-long-chain (3R)-3-hydroxyacyl-CoA + NADP(+) = a very-long-chain 3-oxoacyl-CoA + NADPH + H(+)</text>
        <dbReference type="Rhea" id="RHEA:48680"/>
        <dbReference type="ChEBI" id="CHEBI:15378"/>
        <dbReference type="ChEBI" id="CHEBI:57783"/>
        <dbReference type="ChEBI" id="CHEBI:58349"/>
        <dbReference type="ChEBI" id="CHEBI:85440"/>
        <dbReference type="ChEBI" id="CHEBI:90725"/>
        <dbReference type="EC" id="1.1.1.330"/>
    </reaction>
</comment>
<comment type="pathway">
    <text evidence="3">Lipid metabolism; fatty acid biosynthesis.</text>
</comment>
<comment type="subcellular location">
    <subcellularLocation>
        <location evidence="4">Endoplasmic reticulum membrane</location>
        <topology evidence="4">Single-pass membrane protein</topology>
    </subcellularLocation>
</comment>
<comment type="similarity">
    <text evidence="4">Belongs to the short-chain dehydrogenases/reductases (SDR) family.</text>
</comment>
<sequence length="341" mass="37307">MDGEVLANKSCCGAVVTAFSVIGIVFTILKFTSFASFVYKTFFAKGVKLSVYGAKKGYWAVVTGATDGIGKEYATQLAMSGFNVVLISRTQEKLDALAKELETVAKVKTRTIAIDYTKTTAETFEKLHQDLVGTPITVLINNVGQSHYMPTSFAETTVKEMDDIMHINCFGTLHTTKAVLSIMLRERQKNEKGPRCLILTMGSFAGLLPSPYLSTYAGSKAFLSNWSASLGEEVKKQGIDVWCFNSYLVVSAMSKVRRPTLTIPTPKKFVRAALSSIGLQRGGTNPYISQPYPSHAVMSWSLEQLLGSAKGFVVSQVAAMHLSIRKRALRKEARLQAQNQA</sequence>
<feature type="chain" id="PRO_0000054869" description="Very-long-chain 3-oxoacyl-CoA reductase">
    <location>
        <begin position="1"/>
        <end position="341"/>
    </location>
</feature>
<feature type="transmembrane region" description="Helical" evidence="4">
    <location>
        <begin position="15"/>
        <end position="35"/>
    </location>
</feature>
<feature type="active site" description="Proton donor" evidence="2">
    <location>
        <position position="216"/>
    </location>
</feature>
<feature type="active site" description="Lowers pKa of active site Tyr" evidence="2">
    <location>
        <position position="220"/>
    </location>
</feature>
<feature type="binding site" evidence="1">
    <location>
        <position position="61"/>
    </location>
    <ligand>
        <name>NADP(+)</name>
        <dbReference type="ChEBI" id="CHEBI:58349"/>
    </ligand>
</feature>
<feature type="binding site" evidence="1">
    <location>
        <position position="115"/>
    </location>
    <ligand>
        <name>NADP(+)</name>
        <dbReference type="ChEBI" id="CHEBI:58349"/>
    </ligand>
</feature>
<feature type="binding site" evidence="2">
    <location>
        <position position="142"/>
    </location>
    <ligand>
        <name>NADP(+)</name>
        <dbReference type="ChEBI" id="CHEBI:58349"/>
    </ligand>
</feature>
<feature type="binding site" evidence="1">
    <location>
        <position position="177"/>
    </location>
    <ligand>
        <name>NADP(+)</name>
        <dbReference type="ChEBI" id="CHEBI:58349"/>
    </ligand>
</feature>
<feature type="binding site" evidence="2">
    <location>
        <position position="216"/>
    </location>
    <ligand>
        <name>NADP(+)</name>
        <dbReference type="ChEBI" id="CHEBI:58349"/>
    </ligand>
</feature>
<feature type="binding site" evidence="2">
    <location>
        <position position="220"/>
    </location>
    <ligand>
        <name>NADP(+)</name>
        <dbReference type="ChEBI" id="CHEBI:58349"/>
    </ligand>
</feature>
<feature type="binding site" evidence="2">
    <location>
        <position position="249"/>
    </location>
    <ligand>
        <name>NADP(+)</name>
        <dbReference type="ChEBI" id="CHEBI:58349"/>
    </ligand>
</feature>
<feature type="binding site" evidence="1">
    <location>
        <position position="251"/>
    </location>
    <ligand>
        <name>NADP(+)</name>
        <dbReference type="ChEBI" id="CHEBI:58349"/>
    </ligand>
</feature>
<name>MKAR_SCHPO</name>
<protein>
    <recommendedName>
        <fullName evidence="4">Very-long-chain 3-oxoacyl-CoA reductase</fullName>
        <ecNumber evidence="4">1.1.1.330</ecNumber>
    </recommendedName>
    <alternativeName>
        <fullName evidence="4">3-ketoacyl-CoA reductase</fullName>
        <shortName evidence="4">3-ketoreductase</shortName>
        <shortName evidence="4">KAR</shortName>
    </alternativeName>
    <alternativeName>
        <fullName evidence="4">Microsomal beta-keto-reductase</fullName>
    </alternativeName>
</protein>
<keyword id="KW-0256">Endoplasmic reticulum</keyword>
<keyword id="KW-0275">Fatty acid biosynthesis</keyword>
<keyword id="KW-0276">Fatty acid metabolism</keyword>
<keyword id="KW-0444">Lipid biosynthesis</keyword>
<keyword id="KW-0443">Lipid metabolism</keyword>
<keyword id="KW-0472">Membrane</keyword>
<keyword id="KW-0521">NADP</keyword>
<keyword id="KW-0560">Oxidoreductase</keyword>
<keyword id="KW-1185">Reference proteome</keyword>
<keyword id="KW-0812">Transmembrane</keyword>
<keyword id="KW-1133">Transmembrane helix</keyword>